<gene>
    <name type="primary">PTR2</name>
</gene>
<comment type="function">
    <text>Uptake of small peptides.</text>
</comment>
<comment type="subcellular location">
    <subcellularLocation>
        <location>Membrane</location>
        <topology>Multi-pass membrane protein</topology>
    </subcellularLocation>
</comment>
<comment type="similarity">
    <text evidence="3">Belongs to the major facilitator superfamily. Proton-dependent oligopeptide transporter (POT/PTR) (TC 2.A.17) family.</text>
</comment>
<accession>P46030</accession>
<dbReference type="EMBL" id="U09781">
    <property type="protein sequence ID" value="AAA80167.1"/>
    <property type="molecule type" value="Genomic_DNA"/>
</dbReference>
<dbReference type="SMR" id="P46030"/>
<dbReference type="VEuPathDB" id="FungiDB:CAWG_01534"/>
<dbReference type="VEuPathDB" id="FungiDB:CR_01830C_A"/>
<dbReference type="GO" id="GO:0016020">
    <property type="term" value="C:membrane"/>
    <property type="evidence" value="ECO:0007669"/>
    <property type="project" value="UniProtKB-SubCell"/>
</dbReference>
<dbReference type="GO" id="GO:0022857">
    <property type="term" value="F:transmembrane transporter activity"/>
    <property type="evidence" value="ECO:0007669"/>
    <property type="project" value="InterPro"/>
</dbReference>
<dbReference type="GO" id="GO:0006857">
    <property type="term" value="P:oligopeptide transport"/>
    <property type="evidence" value="ECO:0007669"/>
    <property type="project" value="InterPro"/>
</dbReference>
<dbReference type="GO" id="GO:0015031">
    <property type="term" value="P:protein transport"/>
    <property type="evidence" value="ECO:0007669"/>
    <property type="project" value="UniProtKB-KW"/>
</dbReference>
<dbReference type="CDD" id="cd17350">
    <property type="entry name" value="MFS_PTR2"/>
    <property type="match status" value="1"/>
</dbReference>
<dbReference type="FunFam" id="1.20.1250.20:FF:000085">
    <property type="entry name" value="MFS peptide transporter Ptr2"/>
    <property type="match status" value="1"/>
</dbReference>
<dbReference type="Gene3D" id="1.20.1250.20">
    <property type="entry name" value="MFS general substrate transporter like domains"/>
    <property type="match status" value="1"/>
</dbReference>
<dbReference type="InterPro" id="IPR036259">
    <property type="entry name" value="MFS_trans_sf"/>
</dbReference>
<dbReference type="InterPro" id="IPR000109">
    <property type="entry name" value="POT_fam"/>
</dbReference>
<dbReference type="InterPro" id="IPR018456">
    <property type="entry name" value="PTR2_symporter_CS"/>
</dbReference>
<dbReference type="PANTHER" id="PTHR11654">
    <property type="entry name" value="OLIGOPEPTIDE TRANSPORTER-RELATED"/>
    <property type="match status" value="1"/>
</dbReference>
<dbReference type="Pfam" id="PF00854">
    <property type="entry name" value="PTR2"/>
    <property type="match status" value="1"/>
</dbReference>
<dbReference type="SUPFAM" id="SSF103473">
    <property type="entry name" value="MFS general substrate transporter"/>
    <property type="match status" value="1"/>
</dbReference>
<dbReference type="PROSITE" id="PS01022">
    <property type="entry name" value="PTR2_1"/>
    <property type="match status" value="1"/>
</dbReference>
<dbReference type="PROSITE" id="PS01023">
    <property type="entry name" value="PTR2_2"/>
    <property type="match status" value="1"/>
</dbReference>
<feature type="chain" id="PRO_0000064318" description="Peptide transporter PTR2">
    <location>
        <begin position="1"/>
        <end position="623"/>
    </location>
</feature>
<feature type="transmembrane region" description="Helical" evidence="1">
    <location>
        <begin position="134"/>
        <end position="154"/>
    </location>
</feature>
<feature type="transmembrane region" description="Helical" evidence="1">
    <location>
        <begin position="163"/>
        <end position="183"/>
    </location>
</feature>
<feature type="transmembrane region" description="Helical" evidence="1">
    <location>
        <begin position="191"/>
        <end position="211"/>
    </location>
</feature>
<feature type="transmembrane region" description="Helical" evidence="1">
    <location>
        <begin position="250"/>
        <end position="270"/>
    </location>
</feature>
<feature type="transmembrane region" description="Helical" evidence="1">
    <location>
        <begin position="277"/>
        <end position="297"/>
    </location>
</feature>
<feature type="transmembrane region" description="Helical" evidence="1">
    <location>
        <begin position="385"/>
        <end position="405"/>
    </location>
</feature>
<feature type="transmembrane region" description="Helical" evidence="1">
    <location>
        <begin position="418"/>
        <end position="438"/>
    </location>
</feature>
<feature type="transmembrane region" description="Helical" evidence="1">
    <location>
        <begin position="448"/>
        <end position="468"/>
    </location>
</feature>
<feature type="transmembrane region" description="Helical" evidence="1">
    <location>
        <begin position="499"/>
        <end position="519"/>
    </location>
</feature>
<feature type="transmembrane region" description="Helical" evidence="1">
    <location>
        <begin position="529"/>
        <end position="549"/>
    </location>
</feature>
<feature type="transmembrane region" description="Helical" evidence="1">
    <location>
        <begin position="557"/>
        <end position="577"/>
    </location>
</feature>
<feature type="region of interest" description="Disordered" evidence="2">
    <location>
        <begin position="1"/>
        <end position="20"/>
    </location>
</feature>
<feature type="region of interest" description="Disordered" evidence="2">
    <location>
        <begin position="31"/>
        <end position="58"/>
    </location>
</feature>
<sequence>MVSSDFENEKQPDVVQVLTDEKNISLDDKYDYEDPKNYSTNYVDDYNPKGLRRPTPQESKSLRRVIGNIRYSTFMLCICEFAERASYYSTTGILTNYIQRRIDPDSPHGWGAPPPGSPDASAGALGKGLQAASALTNLLTFLAYVFPLIGGYLGDSTIGRWKAIQWGVFFGFVAHLFFIFASIPQAIENANAGLGLCVIAIITLSAGSGLMKPNLLPLVLDQYPEERDMVKVLPTGESIILDREKSLSRITNVFYLAINIGAFLQIATSYCERRVGFWLAFFVPMILYIIVPIFLFIVKPKLKIKPPQGQVMTNVVKILAVLFSGNFIKRLWNGTFWDHARPSHMEARGTIYYNSKKKSAITWSDQWILDIKQTFDSCKIFLYYIIFNLADSGLGSVETSLIGAMKLDGVPNDLFNNFNPLTIIILIPILEYGLYPLLNKFKIDFKPIWRICFGFVVCSFSQIAGFVLQKQVYEQSPCGYYATNCDSPAPITAWKASSLFILAAAGECWAYTTAYELAYTRSPPALKSLVYALFLVMSAFSAALSLAITPALKDPNLHWVFLAIGLAGFLCAIVMLAQFWNLDKWMENETNERERLDREEEEEANRGIHDVDHPIEAIVSIKS</sequence>
<proteinExistence type="inferred from homology"/>
<organism>
    <name type="scientific">Candida albicans</name>
    <name type="common">Yeast</name>
    <dbReference type="NCBI Taxonomy" id="5476"/>
    <lineage>
        <taxon>Eukaryota</taxon>
        <taxon>Fungi</taxon>
        <taxon>Dikarya</taxon>
        <taxon>Ascomycota</taxon>
        <taxon>Saccharomycotina</taxon>
        <taxon>Pichiomycetes</taxon>
        <taxon>Debaryomycetaceae</taxon>
        <taxon>Candida/Lodderomyces clade</taxon>
        <taxon>Candida</taxon>
    </lineage>
</organism>
<evidence type="ECO:0000255" key="1"/>
<evidence type="ECO:0000256" key="2">
    <source>
        <dbReference type="SAM" id="MobiDB-lite"/>
    </source>
</evidence>
<evidence type="ECO:0000305" key="3"/>
<keyword id="KW-0472">Membrane</keyword>
<keyword id="KW-0571">Peptide transport</keyword>
<keyword id="KW-0653">Protein transport</keyword>
<keyword id="KW-0812">Transmembrane</keyword>
<keyword id="KW-1133">Transmembrane helix</keyword>
<keyword id="KW-0813">Transport</keyword>
<protein>
    <recommendedName>
        <fullName>Peptide transporter PTR2</fullName>
    </recommendedName>
</protein>
<name>PTR2_CANAX</name>
<reference key="1">
    <citation type="journal article" date="1995" name="Microbiology">
        <title>Cloning of a Candida albicans peptide transport gene.</title>
        <authorList>
            <person name="Basrai M.A."/>
            <person name="Lubkowitz M.A."/>
            <person name="Perry J.R."/>
            <person name="Miller D."/>
            <person name="Krainer E."/>
            <person name="Naider F.R."/>
            <person name="Becker J.M."/>
        </authorList>
    </citation>
    <scope>NUCLEOTIDE SEQUENCE [GENOMIC DNA]</scope>
    <source>
        <strain>ATCC 18804 / CBS 562 / JCM 1542 / NBRC 1385 / NRRL Y-12983</strain>
    </source>
</reference>